<organism>
    <name type="scientific">Synechococcus elongatus (strain ATCC 33912 / PCC 7942 / FACHB-805)</name>
    <name type="common">Anacystis nidulans R2</name>
    <dbReference type="NCBI Taxonomy" id="1140"/>
    <lineage>
        <taxon>Bacteria</taxon>
        <taxon>Bacillati</taxon>
        <taxon>Cyanobacteriota</taxon>
        <taxon>Cyanophyceae</taxon>
        <taxon>Synechococcales</taxon>
        <taxon>Synechococcaceae</taxon>
        <taxon>Synechococcus</taxon>
    </lineage>
</organism>
<protein>
    <recommendedName>
        <fullName evidence="1">DNA mismatch repair protein MutS</fullName>
    </recommendedName>
</protein>
<keyword id="KW-0067">ATP-binding</keyword>
<keyword id="KW-0227">DNA damage</keyword>
<keyword id="KW-0234">DNA repair</keyword>
<keyword id="KW-0238">DNA-binding</keyword>
<keyword id="KW-0547">Nucleotide-binding</keyword>
<keyword id="KW-1185">Reference proteome</keyword>
<sequence>MTTSELPEHLAKHEVRYADHRQVERDRLTPMMQHYAEVKDQHLQQILLYRMGDFFECFFQDAIVVARELELVLTSKEAGKEVGRVPMAGIPYHALDRYASQLVEKGYAIAICDQVETAAQAQGPLVRREITRIITPGTILEEGMLQARRNNFLAAVVIAGEHWGLAYADSSTGDYWTSQSTGLEGLTQELYRLQPSEVLFPSAAPDLAGLLRPGQSKPQQIPDCLPDSFCYALRSPMPFELHEARQRLLEHFQLRSLEGCGCEQLPLAIRAAGGLLDYLGETQRESLAPLQKPRTYSLSEFLILDQQTRRNLEITQTQRDGSFHGSLLWALDRTMTSMGGRLLRRWLLQPLLNPEAIRNRQAAIQELCQDGRLRQDLRSLLQKIYDLERLSGRAGAGTANARDLLALAESLLRLPELAQLLSRAQSPLLAQLQQVPPELEQLGDRLQQHLVESPPLQLTEGGLIRSGVAIALDELRQQVESDRQWIASLEASERTATGINSLKVGYSKTFGYFISLSRSKADQVPDHYIRRQTLTNEERFITPDLKERESRILNAQTDLNQLEYDLFVGLRSEVSHHVETIRAIATAVAAADVLAALAEVAVYQNYCCPEIRDDRQLAIQDGRHPVVEQALPSGFYVPNSCGLGSDRGPDLIVLTGPNASGKSCYLRQVGLIQLLAQIGSFVPAKNAQVGICDRIFTRVGAVDDLATGQSTFMVEMNETANILNHATARSLVLLDEIGRGTATFDGLSIAWAVAEYLAREIQARTIFATHYHELNELSGLLKNVANFQVTVKELPDRIVFLHQVQPGGADRSYGIEAARLAGLPSEVIDRAREVMSRIEKHSRIAVGLRRGNGSQRRTQASPQQIDATIATEQLGLFSGPSH</sequence>
<reference key="1">
    <citation type="submission" date="2005-08" db="EMBL/GenBank/DDBJ databases">
        <title>Complete sequence of chromosome 1 of Synechococcus elongatus PCC 7942.</title>
        <authorList>
            <consortium name="US DOE Joint Genome Institute"/>
            <person name="Copeland A."/>
            <person name="Lucas S."/>
            <person name="Lapidus A."/>
            <person name="Barry K."/>
            <person name="Detter J.C."/>
            <person name="Glavina T."/>
            <person name="Hammon N."/>
            <person name="Israni S."/>
            <person name="Pitluck S."/>
            <person name="Schmutz J."/>
            <person name="Larimer F."/>
            <person name="Land M."/>
            <person name="Kyrpides N."/>
            <person name="Lykidis A."/>
            <person name="Golden S."/>
            <person name="Richardson P."/>
        </authorList>
    </citation>
    <scope>NUCLEOTIDE SEQUENCE [LARGE SCALE GENOMIC DNA]</scope>
    <source>
        <strain>ATCC 33912 / PCC 7942 / FACHB-805</strain>
    </source>
</reference>
<feature type="chain" id="PRO_1000008114" description="DNA mismatch repair protein MutS">
    <location>
        <begin position="1"/>
        <end position="882"/>
    </location>
</feature>
<feature type="binding site" evidence="1">
    <location>
        <begin position="656"/>
        <end position="663"/>
    </location>
    <ligand>
        <name>ATP</name>
        <dbReference type="ChEBI" id="CHEBI:30616"/>
    </ligand>
</feature>
<name>MUTS_SYNE7</name>
<accession>Q31KZ2</accession>
<comment type="function">
    <text evidence="1">This protein is involved in the repair of mismatches in DNA. It is possible that it carries out the mismatch recognition step. This protein has a weak ATPase activity.</text>
</comment>
<comment type="similarity">
    <text evidence="1">Belongs to the DNA mismatch repair MutS family.</text>
</comment>
<gene>
    <name evidence="1" type="primary">mutS</name>
    <name type="ordered locus">Synpcc7942_2247</name>
</gene>
<proteinExistence type="inferred from homology"/>
<dbReference type="EMBL" id="CP000100">
    <property type="protein sequence ID" value="ABB58277.1"/>
    <property type="molecule type" value="Genomic_DNA"/>
</dbReference>
<dbReference type="RefSeq" id="WP_011378371.1">
    <property type="nucleotide sequence ID" value="NZ_JACJTX010000001.1"/>
</dbReference>
<dbReference type="SMR" id="Q31KZ2"/>
<dbReference type="STRING" id="1140.Synpcc7942_2247"/>
<dbReference type="PaxDb" id="1140-Synpcc7942_2247"/>
<dbReference type="GeneID" id="72431129"/>
<dbReference type="KEGG" id="syf:Synpcc7942_2247"/>
<dbReference type="eggNOG" id="COG0249">
    <property type="taxonomic scope" value="Bacteria"/>
</dbReference>
<dbReference type="HOGENOM" id="CLU_002472_1_3_3"/>
<dbReference type="OrthoDB" id="9802448at2"/>
<dbReference type="BioCyc" id="SYNEL:SYNPCC7942_2247-MONOMER"/>
<dbReference type="Proteomes" id="UP000889800">
    <property type="component" value="Chromosome"/>
</dbReference>
<dbReference type="GO" id="GO:0005829">
    <property type="term" value="C:cytosol"/>
    <property type="evidence" value="ECO:0007669"/>
    <property type="project" value="TreeGrafter"/>
</dbReference>
<dbReference type="GO" id="GO:0005524">
    <property type="term" value="F:ATP binding"/>
    <property type="evidence" value="ECO:0007669"/>
    <property type="project" value="UniProtKB-UniRule"/>
</dbReference>
<dbReference type="GO" id="GO:0140664">
    <property type="term" value="F:ATP-dependent DNA damage sensor activity"/>
    <property type="evidence" value="ECO:0007669"/>
    <property type="project" value="InterPro"/>
</dbReference>
<dbReference type="GO" id="GO:0003684">
    <property type="term" value="F:damaged DNA binding"/>
    <property type="evidence" value="ECO:0007669"/>
    <property type="project" value="UniProtKB-UniRule"/>
</dbReference>
<dbReference type="GO" id="GO:0030983">
    <property type="term" value="F:mismatched DNA binding"/>
    <property type="evidence" value="ECO:0007669"/>
    <property type="project" value="InterPro"/>
</dbReference>
<dbReference type="GO" id="GO:0006298">
    <property type="term" value="P:mismatch repair"/>
    <property type="evidence" value="ECO:0007669"/>
    <property type="project" value="UniProtKB-UniRule"/>
</dbReference>
<dbReference type="CDD" id="cd03284">
    <property type="entry name" value="ABC_MutS1"/>
    <property type="match status" value="1"/>
</dbReference>
<dbReference type="FunFam" id="1.10.1420.10:FF:000001">
    <property type="entry name" value="DNA mismatch repair protein MutS"/>
    <property type="match status" value="1"/>
</dbReference>
<dbReference type="FunFam" id="3.40.50.300:FF:000870">
    <property type="entry name" value="MutS protein homolog 4"/>
    <property type="match status" value="1"/>
</dbReference>
<dbReference type="Gene3D" id="1.10.1420.10">
    <property type="match status" value="2"/>
</dbReference>
<dbReference type="Gene3D" id="3.40.1170.10">
    <property type="entry name" value="DNA repair protein MutS, domain I"/>
    <property type="match status" value="1"/>
</dbReference>
<dbReference type="Gene3D" id="3.30.420.110">
    <property type="entry name" value="MutS, connector domain"/>
    <property type="match status" value="1"/>
</dbReference>
<dbReference type="Gene3D" id="3.40.50.300">
    <property type="entry name" value="P-loop containing nucleotide triphosphate hydrolases"/>
    <property type="match status" value="1"/>
</dbReference>
<dbReference type="HAMAP" id="MF_00096">
    <property type="entry name" value="MutS"/>
    <property type="match status" value="1"/>
</dbReference>
<dbReference type="InterPro" id="IPR005748">
    <property type="entry name" value="DNA_mismatch_repair_MutS"/>
</dbReference>
<dbReference type="InterPro" id="IPR007695">
    <property type="entry name" value="DNA_mismatch_repair_MutS-lik_N"/>
</dbReference>
<dbReference type="InterPro" id="IPR017261">
    <property type="entry name" value="DNA_mismatch_repair_MutS/MSH"/>
</dbReference>
<dbReference type="InterPro" id="IPR000432">
    <property type="entry name" value="DNA_mismatch_repair_MutS_C"/>
</dbReference>
<dbReference type="InterPro" id="IPR007861">
    <property type="entry name" value="DNA_mismatch_repair_MutS_clamp"/>
</dbReference>
<dbReference type="InterPro" id="IPR007696">
    <property type="entry name" value="DNA_mismatch_repair_MutS_core"/>
</dbReference>
<dbReference type="InterPro" id="IPR016151">
    <property type="entry name" value="DNA_mismatch_repair_MutS_N"/>
</dbReference>
<dbReference type="InterPro" id="IPR036187">
    <property type="entry name" value="DNA_mismatch_repair_MutS_sf"/>
</dbReference>
<dbReference type="InterPro" id="IPR007860">
    <property type="entry name" value="DNA_mmatch_repair_MutS_con_dom"/>
</dbReference>
<dbReference type="InterPro" id="IPR045076">
    <property type="entry name" value="MutS"/>
</dbReference>
<dbReference type="InterPro" id="IPR036678">
    <property type="entry name" value="MutS_con_dom_sf"/>
</dbReference>
<dbReference type="InterPro" id="IPR027417">
    <property type="entry name" value="P-loop_NTPase"/>
</dbReference>
<dbReference type="NCBIfam" id="TIGR01070">
    <property type="entry name" value="mutS1"/>
    <property type="match status" value="1"/>
</dbReference>
<dbReference type="NCBIfam" id="NF003810">
    <property type="entry name" value="PRK05399.1"/>
    <property type="match status" value="1"/>
</dbReference>
<dbReference type="PANTHER" id="PTHR11361:SF34">
    <property type="entry name" value="DNA MISMATCH REPAIR PROTEIN MSH1, MITOCHONDRIAL"/>
    <property type="match status" value="1"/>
</dbReference>
<dbReference type="PANTHER" id="PTHR11361">
    <property type="entry name" value="DNA MISMATCH REPAIR PROTEIN MUTS FAMILY MEMBER"/>
    <property type="match status" value="1"/>
</dbReference>
<dbReference type="Pfam" id="PF01624">
    <property type="entry name" value="MutS_I"/>
    <property type="match status" value="1"/>
</dbReference>
<dbReference type="Pfam" id="PF05188">
    <property type="entry name" value="MutS_II"/>
    <property type="match status" value="1"/>
</dbReference>
<dbReference type="Pfam" id="PF05192">
    <property type="entry name" value="MutS_III"/>
    <property type="match status" value="1"/>
</dbReference>
<dbReference type="Pfam" id="PF05190">
    <property type="entry name" value="MutS_IV"/>
    <property type="match status" value="1"/>
</dbReference>
<dbReference type="Pfam" id="PF00488">
    <property type="entry name" value="MutS_V"/>
    <property type="match status" value="1"/>
</dbReference>
<dbReference type="PIRSF" id="PIRSF037677">
    <property type="entry name" value="DNA_mis_repair_Msh6"/>
    <property type="match status" value="1"/>
</dbReference>
<dbReference type="SMART" id="SM00534">
    <property type="entry name" value="MUTSac"/>
    <property type="match status" value="1"/>
</dbReference>
<dbReference type="SMART" id="SM00533">
    <property type="entry name" value="MUTSd"/>
    <property type="match status" value="1"/>
</dbReference>
<dbReference type="SUPFAM" id="SSF55271">
    <property type="entry name" value="DNA repair protein MutS, domain I"/>
    <property type="match status" value="1"/>
</dbReference>
<dbReference type="SUPFAM" id="SSF53150">
    <property type="entry name" value="DNA repair protein MutS, domain II"/>
    <property type="match status" value="1"/>
</dbReference>
<dbReference type="SUPFAM" id="SSF48334">
    <property type="entry name" value="DNA repair protein MutS, domain III"/>
    <property type="match status" value="1"/>
</dbReference>
<dbReference type="SUPFAM" id="SSF52540">
    <property type="entry name" value="P-loop containing nucleoside triphosphate hydrolases"/>
    <property type="match status" value="1"/>
</dbReference>
<dbReference type="PROSITE" id="PS00486">
    <property type="entry name" value="DNA_MISMATCH_REPAIR_2"/>
    <property type="match status" value="1"/>
</dbReference>
<evidence type="ECO:0000255" key="1">
    <source>
        <dbReference type="HAMAP-Rule" id="MF_00096"/>
    </source>
</evidence>